<proteinExistence type="inferred from homology"/>
<feature type="chain" id="PRO_0000267892" description="Large ribosomal subunit protein bL17">
    <location>
        <begin position="1"/>
        <end position="143"/>
    </location>
</feature>
<organism>
    <name type="scientific">Chelativorans sp. (strain BNC1)</name>
    <dbReference type="NCBI Taxonomy" id="266779"/>
    <lineage>
        <taxon>Bacteria</taxon>
        <taxon>Pseudomonadati</taxon>
        <taxon>Pseudomonadota</taxon>
        <taxon>Alphaproteobacteria</taxon>
        <taxon>Hyphomicrobiales</taxon>
        <taxon>Phyllobacteriaceae</taxon>
        <taxon>Chelativorans</taxon>
    </lineage>
</organism>
<reference key="1">
    <citation type="submission" date="2006-06" db="EMBL/GenBank/DDBJ databases">
        <title>Complete sequence of chromosome of Mesorhizobium sp. BNC1.</title>
        <authorList>
            <consortium name="US DOE Joint Genome Institute"/>
            <person name="Copeland A."/>
            <person name="Lucas S."/>
            <person name="Lapidus A."/>
            <person name="Barry K."/>
            <person name="Detter J.C."/>
            <person name="Glavina del Rio T."/>
            <person name="Hammon N."/>
            <person name="Israni S."/>
            <person name="Dalin E."/>
            <person name="Tice H."/>
            <person name="Pitluck S."/>
            <person name="Chertkov O."/>
            <person name="Brettin T."/>
            <person name="Bruce D."/>
            <person name="Han C."/>
            <person name="Tapia R."/>
            <person name="Gilna P."/>
            <person name="Schmutz J."/>
            <person name="Larimer F."/>
            <person name="Land M."/>
            <person name="Hauser L."/>
            <person name="Kyrpides N."/>
            <person name="Mikhailova N."/>
            <person name="Richardson P."/>
        </authorList>
    </citation>
    <scope>NUCLEOTIDE SEQUENCE [LARGE SCALE GENOMIC DNA]</scope>
    <source>
        <strain>BNC1</strain>
    </source>
</reference>
<dbReference type="EMBL" id="CP000390">
    <property type="protein sequence ID" value="ABG63048.1"/>
    <property type="molecule type" value="Genomic_DNA"/>
</dbReference>
<dbReference type="SMR" id="Q11HS7"/>
<dbReference type="STRING" id="266779.Meso_1653"/>
<dbReference type="KEGG" id="mes:Meso_1653"/>
<dbReference type="eggNOG" id="COG0203">
    <property type="taxonomic scope" value="Bacteria"/>
</dbReference>
<dbReference type="HOGENOM" id="CLU_074407_2_0_5"/>
<dbReference type="OrthoDB" id="9809073at2"/>
<dbReference type="GO" id="GO:0022625">
    <property type="term" value="C:cytosolic large ribosomal subunit"/>
    <property type="evidence" value="ECO:0007669"/>
    <property type="project" value="TreeGrafter"/>
</dbReference>
<dbReference type="GO" id="GO:0003735">
    <property type="term" value="F:structural constituent of ribosome"/>
    <property type="evidence" value="ECO:0007669"/>
    <property type="project" value="InterPro"/>
</dbReference>
<dbReference type="GO" id="GO:0006412">
    <property type="term" value="P:translation"/>
    <property type="evidence" value="ECO:0007669"/>
    <property type="project" value="UniProtKB-UniRule"/>
</dbReference>
<dbReference type="FunFam" id="3.90.1030.10:FF:000001">
    <property type="entry name" value="50S ribosomal protein L17"/>
    <property type="match status" value="1"/>
</dbReference>
<dbReference type="Gene3D" id="3.90.1030.10">
    <property type="entry name" value="Ribosomal protein L17"/>
    <property type="match status" value="1"/>
</dbReference>
<dbReference type="HAMAP" id="MF_01368">
    <property type="entry name" value="Ribosomal_bL17"/>
    <property type="match status" value="1"/>
</dbReference>
<dbReference type="InterPro" id="IPR000456">
    <property type="entry name" value="Ribosomal_bL17"/>
</dbReference>
<dbReference type="InterPro" id="IPR047859">
    <property type="entry name" value="Ribosomal_bL17_CS"/>
</dbReference>
<dbReference type="InterPro" id="IPR036373">
    <property type="entry name" value="Ribosomal_bL17_sf"/>
</dbReference>
<dbReference type="NCBIfam" id="TIGR00059">
    <property type="entry name" value="L17"/>
    <property type="match status" value="1"/>
</dbReference>
<dbReference type="PANTHER" id="PTHR14413:SF16">
    <property type="entry name" value="LARGE RIBOSOMAL SUBUNIT PROTEIN BL17M"/>
    <property type="match status" value="1"/>
</dbReference>
<dbReference type="PANTHER" id="PTHR14413">
    <property type="entry name" value="RIBOSOMAL PROTEIN L17"/>
    <property type="match status" value="1"/>
</dbReference>
<dbReference type="Pfam" id="PF01196">
    <property type="entry name" value="Ribosomal_L17"/>
    <property type="match status" value="1"/>
</dbReference>
<dbReference type="SUPFAM" id="SSF64263">
    <property type="entry name" value="Prokaryotic ribosomal protein L17"/>
    <property type="match status" value="1"/>
</dbReference>
<dbReference type="PROSITE" id="PS01167">
    <property type="entry name" value="RIBOSOMAL_L17"/>
    <property type="match status" value="1"/>
</dbReference>
<keyword id="KW-0687">Ribonucleoprotein</keyword>
<keyword id="KW-0689">Ribosomal protein</keyword>
<evidence type="ECO:0000255" key="1">
    <source>
        <dbReference type="HAMAP-Rule" id="MF_01368"/>
    </source>
</evidence>
<evidence type="ECO:0000305" key="2"/>
<sequence>MRHGKAGRKLNRTSSHRKAMFANMAASLIEHEQIVTTLPKAKELRPIVEKLVTLGKRGDLHARRQAIAAIRSETLVRRLFDTLAPRYASRNGGYTRIMKAGFRHGDNAAMAVIEFVDRDPSVKGAADRARVEAEAANEEAEAA</sequence>
<gene>
    <name evidence="1" type="primary">rplQ</name>
    <name type="ordered locus">Meso_1653</name>
</gene>
<name>RL17_CHESB</name>
<accession>Q11HS7</accession>
<comment type="subunit">
    <text evidence="1">Part of the 50S ribosomal subunit. Contacts protein L32.</text>
</comment>
<comment type="similarity">
    <text evidence="1">Belongs to the bacterial ribosomal protein bL17 family.</text>
</comment>
<protein>
    <recommendedName>
        <fullName evidence="1">Large ribosomal subunit protein bL17</fullName>
    </recommendedName>
    <alternativeName>
        <fullName evidence="2">50S ribosomal protein L17</fullName>
    </alternativeName>
</protein>